<comment type="function">
    <text evidence="1">Involved in protein synthesis. Involved in microtubule stabilization (By similarity).</text>
</comment>
<comment type="subcellular location">
    <subcellularLocation>
        <location evidence="1">Cytoplasm</location>
        <location evidence="1">Cytoskeleton</location>
    </subcellularLocation>
</comment>
<comment type="similarity">
    <text evidence="2">Belongs to the TCTP family.</text>
</comment>
<reference key="1">
    <citation type="journal article" date="2005" name="Science">
        <title>The genome of the basidiomycetous yeast and human pathogen Cryptococcus neoformans.</title>
        <authorList>
            <person name="Loftus B.J."/>
            <person name="Fung E."/>
            <person name="Roncaglia P."/>
            <person name="Rowley D."/>
            <person name="Amedeo P."/>
            <person name="Bruno D."/>
            <person name="Vamathevan J."/>
            <person name="Miranda M."/>
            <person name="Anderson I.J."/>
            <person name="Fraser J.A."/>
            <person name="Allen J.E."/>
            <person name="Bosdet I.E."/>
            <person name="Brent M.R."/>
            <person name="Chiu R."/>
            <person name="Doering T.L."/>
            <person name="Donlin M.J."/>
            <person name="D'Souza C.A."/>
            <person name="Fox D.S."/>
            <person name="Grinberg V."/>
            <person name="Fu J."/>
            <person name="Fukushima M."/>
            <person name="Haas B.J."/>
            <person name="Huang J.C."/>
            <person name="Janbon G."/>
            <person name="Jones S.J.M."/>
            <person name="Koo H.L."/>
            <person name="Krzywinski M.I."/>
            <person name="Kwon-Chung K.J."/>
            <person name="Lengeler K.B."/>
            <person name="Maiti R."/>
            <person name="Marra M.A."/>
            <person name="Marra R.E."/>
            <person name="Mathewson C.A."/>
            <person name="Mitchell T.G."/>
            <person name="Pertea M."/>
            <person name="Riggs F.R."/>
            <person name="Salzberg S.L."/>
            <person name="Schein J.E."/>
            <person name="Shvartsbeyn A."/>
            <person name="Shin H."/>
            <person name="Shumway M."/>
            <person name="Specht C.A."/>
            <person name="Suh B.B."/>
            <person name="Tenney A."/>
            <person name="Utterback T.R."/>
            <person name="Wickes B.L."/>
            <person name="Wortman J.R."/>
            <person name="Wye N.H."/>
            <person name="Kronstad J.W."/>
            <person name="Lodge J.K."/>
            <person name="Heitman J."/>
            <person name="Davis R.W."/>
            <person name="Fraser C.M."/>
            <person name="Hyman R.W."/>
        </authorList>
    </citation>
    <scope>NUCLEOTIDE SEQUENCE [LARGE SCALE GENOMIC DNA]</scope>
    <source>
        <strain>B-3501A</strain>
    </source>
</reference>
<gene>
    <name type="ordered locus">CNBM1320</name>
</gene>
<keyword id="KW-0963">Cytoplasm</keyword>
<keyword id="KW-0206">Cytoskeleton</keyword>
<keyword id="KW-0493">Microtubule</keyword>
<keyword id="KW-0648">Protein biosynthesis</keyword>
<feature type="chain" id="PRO_0000410303" description="Translationally-controlled tumor protein homolog">
    <location>
        <begin position="1"/>
        <end position="167"/>
    </location>
</feature>
<feature type="domain" description="TCTP" evidence="2">
    <location>
        <begin position="1"/>
        <end position="167"/>
    </location>
</feature>
<accession>P0CR83</accession>
<accession>Q55I87</accession>
<accession>Q5K7S2</accession>
<name>TCTP_CRYNB</name>
<evidence type="ECO:0000250" key="1"/>
<evidence type="ECO:0000255" key="2">
    <source>
        <dbReference type="PROSITE-ProRule" id="PRU01133"/>
    </source>
</evidence>
<dbReference type="EMBL" id="AAEY01000062">
    <property type="protein sequence ID" value="EAL17566.1"/>
    <property type="molecule type" value="Genomic_DNA"/>
</dbReference>
<dbReference type="RefSeq" id="XP_772213.1">
    <property type="nucleotide sequence ID" value="XM_767120.1"/>
</dbReference>
<dbReference type="SMR" id="P0CR83"/>
<dbReference type="EnsemblFungi" id="AAW46936">
    <property type="protein sequence ID" value="AAW46936"/>
    <property type="gene ID" value="CNM01460"/>
</dbReference>
<dbReference type="GeneID" id="4939492"/>
<dbReference type="KEGG" id="cnb:CNBM1320"/>
<dbReference type="VEuPathDB" id="FungiDB:CNBM1320"/>
<dbReference type="HOGENOM" id="CLU_095877_0_0_1"/>
<dbReference type="OrthoDB" id="3711at5206"/>
<dbReference type="GO" id="GO:0005737">
    <property type="term" value="C:cytoplasm"/>
    <property type="evidence" value="ECO:0007669"/>
    <property type="project" value="UniProtKB-KW"/>
</dbReference>
<dbReference type="GO" id="GO:0005874">
    <property type="term" value="C:microtubule"/>
    <property type="evidence" value="ECO:0007669"/>
    <property type="project" value="UniProtKB-KW"/>
</dbReference>
<dbReference type="GO" id="GO:0005509">
    <property type="term" value="F:calcium ion binding"/>
    <property type="evidence" value="ECO:0007669"/>
    <property type="project" value="TreeGrafter"/>
</dbReference>
<dbReference type="GO" id="GO:0006412">
    <property type="term" value="P:translation"/>
    <property type="evidence" value="ECO:0007669"/>
    <property type="project" value="UniProtKB-KW"/>
</dbReference>
<dbReference type="FunFam" id="2.170.150.10:FF:000002">
    <property type="entry name" value="Translationally-controlled tumor protein homolog"/>
    <property type="match status" value="1"/>
</dbReference>
<dbReference type="Gene3D" id="2.170.150.10">
    <property type="entry name" value="Metal Binding Protein, Guanine Nucleotide Exchange Factor, Chain A"/>
    <property type="match status" value="1"/>
</dbReference>
<dbReference type="InterPro" id="IPR011057">
    <property type="entry name" value="Mss4-like_sf"/>
</dbReference>
<dbReference type="InterPro" id="IPR011323">
    <property type="entry name" value="Mss4/transl-control_tumour"/>
</dbReference>
<dbReference type="InterPro" id="IPR034737">
    <property type="entry name" value="TCTP"/>
</dbReference>
<dbReference type="InterPro" id="IPR018103">
    <property type="entry name" value="Translation_control_tumour_CS"/>
</dbReference>
<dbReference type="InterPro" id="IPR018105">
    <property type="entry name" value="Translational_control_tumour_p"/>
</dbReference>
<dbReference type="PANTHER" id="PTHR11991">
    <property type="entry name" value="TRANSLATIONALLY CONTROLLED TUMOR PROTEIN-RELATED"/>
    <property type="match status" value="1"/>
</dbReference>
<dbReference type="PANTHER" id="PTHR11991:SF0">
    <property type="entry name" value="TRANSLATIONALLY-CONTROLLED TUMOR PROTEIN"/>
    <property type="match status" value="1"/>
</dbReference>
<dbReference type="Pfam" id="PF00838">
    <property type="entry name" value="TCTP"/>
    <property type="match status" value="1"/>
</dbReference>
<dbReference type="PRINTS" id="PR01653">
    <property type="entry name" value="TCTPROTEIN"/>
</dbReference>
<dbReference type="SUPFAM" id="SSF51316">
    <property type="entry name" value="Mss4-like"/>
    <property type="match status" value="1"/>
</dbReference>
<dbReference type="PROSITE" id="PS01002">
    <property type="entry name" value="TCTP_1"/>
    <property type="match status" value="1"/>
</dbReference>
<dbReference type="PROSITE" id="PS51797">
    <property type="entry name" value="TCTP_3"/>
    <property type="match status" value="1"/>
</dbReference>
<organism>
    <name type="scientific">Cryptococcus neoformans var. neoformans serotype D (strain B-3501A)</name>
    <name type="common">Filobasidiella neoformans</name>
    <dbReference type="NCBI Taxonomy" id="283643"/>
    <lineage>
        <taxon>Eukaryota</taxon>
        <taxon>Fungi</taxon>
        <taxon>Dikarya</taxon>
        <taxon>Basidiomycota</taxon>
        <taxon>Agaricomycotina</taxon>
        <taxon>Tremellomycetes</taxon>
        <taxon>Tremellales</taxon>
        <taxon>Cryptococcaceae</taxon>
        <taxon>Cryptococcus</taxon>
        <taxon>Cryptococcus neoformans species complex</taxon>
    </lineage>
</organism>
<proteinExistence type="inferred from homology"/>
<sequence length="167" mass="18763">MLIYQDVLTGDEMISDAFPIKEIGDIAYEVDCANIIIKEGDVDIGGNPSAEEAAEALEEGAQQVNNVVHSFRLQSTSFDKKSYLTYLKGYMKAIKSKLQESNPDRVAAFEKGAQDFAKKIVANFKDYEFYIGESMNPDGMVCLLNYREDGVTPYFTMWKDGLKEIKI</sequence>
<protein>
    <recommendedName>
        <fullName>Translationally-controlled tumor protein homolog</fullName>
        <shortName>TCTP</shortName>
    </recommendedName>
</protein>